<name>HFB2A_ARATH</name>
<comment type="function">
    <text>Transcriptional regulator that specifically binds DNA sequence 5'-AGAAnnTTCT-3' known as heat shock promoter elements (HSE).</text>
</comment>
<comment type="subunit">
    <text evidence="1">Homotrimer.</text>
</comment>
<comment type="subcellular location">
    <subcellularLocation>
        <location evidence="4">Nucleus</location>
    </subcellularLocation>
</comment>
<comment type="domain">
    <text>The hydrophobic-rich region (HR-A/B) corresponds to the oligomerization domain.</text>
</comment>
<comment type="PTM">
    <text evidence="1">Exhibits temperature-dependent phosphorylation.</text>
</comment>
<comment type="similarity">
    <text evidence="4">Belongs to the HSF family. Class B subfamily.</text>
</comment>
<proteinExistence type="evidence at transcript level"/>
<protein>
    <recommendedName>
        <fullName>Heat stress transcription factor B-2a</fullName>
        <shortName>AtHsfB2a</shortName>
    </recommendedName>
    <alternativeName>
        <fullName>AtHsf-22</fullName>
    </alternativeName>
    <alternativeName>
        <fullName>Heat shock factor protein 6</fullName>
        <shortName>HSF 6</shortName>
    </alternativeName>
    <alternativeName>
        <fullName>Heat shock transcription factor 6</fullName>
        <shortName>HSTF 6</shortName>
    </alternativeName>
</protein>
<gene>
    <name type="primary">HSFB2A</name>
    <name type="synonym">HSF22</name>
    <name type="synonym">HSF6</name>
    <name type="ordered locus">At5g62020</name>
    <name type="ORF">MTG10.4</name>
</gene>
<reference key="1">
    <citation type="book" date="1999" name="Plant responses to environmental stress">
        <title>De-repression of heat shock protein synthesis in transgenic plants.</title>
        <editorList>
            <person name="Smallwood M.F."/>
            <person name="Calvert C.M."/>
            <person name="Bowles D.J."/>
        </editorList>
        <authorList>
            <person name="Schoeffl F."/>
            <person name="Praendl R."/>
        </authorList>
    </citation>
    <scope>NUCLEOTIDE SEQUENCE [MRNA]</scope>
    <source>
        <strain>cv. Columbia</strain>
        <tissue>Green siliques</tissue>
    </source>
</reference>
<reference key="2">
    <citation type="journal article" date="1998" name="DNA Res.">
        <title>Structural analysis of Arabidopsis thaliana chromosome 5. VII. Sequence features of the regions of 1,013,767 bp covered by sixteen physically assigned P1 and TAC clones.</title>
        <authorList>
            <person name="Nakamura Y."/>
            <person name="Sato S."/>
            <person name="Asamizu E."/>
            <person name="Kaneko T."/>
            <person name="Kotani H."/>
            <person name="Miyajima N."/>
            <person name="Tabata S."/>
        </authorList>
    </citation>
    <scope>NUCLEOTIDE SEQUENCE [LARGE SCALE GENOMIC DNA]</scope>
    <source>
        <strain>cv. Columbia</strain>
    </source>
</reference>
<reference key="3">
    <citation type="journal article" date="2017" name="Plant J.">
        <title>Araport11: a complete reannotation of the Arabidopsis thaliana reference genome.</title>
        <authorList>
            <person name="Cheng C.Y."/>
            <person name="Krishnakumar V."/>
            <person name="Chan A.P."/>
            <person name="Thibaud-Nissen F."/>
            <person name="Schobel S."/>
            <person name="Town C.D."/>
        </authorList>
    </citation>
    <scope>GENOME REANNOTATION</scope>
    <source>
        <strain>cv. Columbia</strain>
    </source>
</reference>
<reference key="4">
    <citation type="journal article" date="2003" name="Science">
        <title>Empirical analysis of transcriptional activity in the Arabidopsis genome.</title>
        <authorList>
            <person name="Yamada K."/>
            <person name="Lim J."/>
            <person name="Dale J.M."/>
            <person name="Chen H."/>
            <person name="Shinn P."/>
            <person name="Palm C.J."/>
            <person name="Southwick A.M."/>
            <person name="Wu H.C."/>
            <person name="Kim C.J."/>
            <person name="Nguyen M."/>
            <person name="Pham P.K."/>
            <person name="Cheuk R.F."/>
            <person name="Karlin-Newmann G."/>
            <person name="Liu S.X."/>
            <person name="Lam B."/>
            <person name="Sakano H."/>
            <person name="Wu T."/>
            <person name="Yu G."/>
            <person name="Miranda M."/>
            <person name="Quach H.L."/>
            <person name="Tripp M."/>
            <person name="Chang C.H."/>
            <person name="Lee J.M."/>
            <person name="Toriumi M.J."/>
            <person name="Chan M.M."/>
            <person name="Tang C.C."/>
            <person name="Onodera C.S."/>
            <person name="Deng J.M."/>
            <person name="Akiyama K."/>
            <person name="Ansari Y."/>
            <person name="Arakawa T."/>
            <person name="Banh J."/>
            <person name="Banno F."/>
            <person name="Bowser L."/>
            <person name="Brooks S.Y."/>
            <person name="Carninci P."/>
            <person name="Chao Q."/>
            <person name="Choy N."/>
            <person name="Enju A."/>
            <person name="Goldsmith A.D."/>
            <person name="Gurjal M."/>
            <person name="Hansen N.F."/>
            <person name="Hayashizaki Y."/>
            <person name="Johnson-Hopson C."/>
            <person name="Hsuan V.W."/>
            <person name="Iida K."/>
            <person name="Karnes M."/>
            <person name="Khan S."/>
            <person name="Koesema E."/>
            <person name="Ishida J."/>
            <person name="Jiang P.X."/>
            <person name="Jones T."/>
            <person name="Kawai J."/>
            <person name="Kamiya A."/>
            <person name="Meyers C."/>
            <person name="Nakajima M."/>
            <person name="Narusaka M."/>
            <person name="Seki M."/>
            <person name="Sakurai T."/>
            <person name="Satou M."/>
            <person name="Tamse R."/>
            <person name="Vaysberg M."/>
            <person name="Wallender E.K."/>
            <person name="Wong C."/>
            <person name="Yamamura Y."/>
            <person name="Yuan S."/>
            <person name="Shinozaki K."/>
            <person name="Davis R.W."/>
            <person name="Theologis A."/>
            <person name="Ecker J.R."/>
        </authorList>
    </citation>
    <scope>NUCLEOTIDE SEQUENCE [LARGE SCALE MRNA]</scope>
    <source>
        <strain>cv. Columbia</strain>
    </source>
</reference>
<reference key="5">
    <citation type="submission" date="2006-07" db="EMBL/GenBank/DDBJ databases">
        <title>Large-scale analysis of RIKEN Arabidopsis full-length (RAFL) cDNAs.</title>
        <authorList>
            <person name="Totoki Y."/>
            <person name="Seki M."/>
            <person name="Ishida J."/>
            <person name="Nakajima M."/>
            <person name="Enju A."/>
            <person name="Kamiya A."/>
            <person name="Narusaka M."/>
            <person name="Shin-i T."/>
            <person name="Nakagawa M."/>
            <person name="Sakamoto N."/>
            <person name="Oishi K."/>
            <person name="Kohara Y."/>
            <person name="Kobayashi M."/>
            <person name="Toyoda A."/>
            <person name="Sakaki Y."/>
            <person name="Sakurai T."/>
            <person name="Iida K."/>
            <person name="Akiyama K."/>
            <person name="Satou M."/>
            <person name="Toyoda T."/>
            <person name="Konagaya A."/>
            <person name="Carninci P."/>
            <person name="Kawai J."/>
            <person name="Hayashizaki Y."/>
            <person name="Shinozaki K."/>
        </authorList>
    </citation>
    <scope>NUCLEOTIDE SEQUENCE [LARGE SCALE MRNA]</scope>
    <source>
        <strain>cv. Columbia</strain>
    </source>
</reference>
<reference key="6">
    <citation type="journal article" date="2001" name="Cell Stress Chaperones">
        <title>Arabidopsis and the heat stress transcription factor world: how many heat stress transcription factors do we need?</title>
        <authorList>
            <person name="Nover L."/>
            <person name="Bharti K."/>
            <person name="Doering P."/>
            <person name="Mishra S.K."/>
            <person name="Ganguli A."/>
            <person name="Scharf K.-D."/>
        </authorList>
    </citation>
    <scope>GENE FAMILY</scope>
    <scope>NOMENCLATURE</scope>
</reference>
<reference key="7">
    <citation type="journal article" date="2008" name="J. Genet. Genomics">
        <title>Genome-wide analysis of heat shock transcription factor families in rice and Arabidopsis.</title>
        <authorList>
            <person name="Guo J."/>
            <person name="Wu J."/>
            <person name="Ji Q."/>
            <person name="Wang C."/>
            <person name="Luo L."/>
            <person name="Yuan Y."/>
            <person name="Wang Y."/>
            <person name="Wang J."/>
        </authorList>
    </citation>
    <scope>GENE FAMILY</scope>
    <scope>NOMENCLATURE</scope>
</reference>
<organism>
    <name type="scientific">Arabidopsis thaliana</name>
    <name type="common">Mouse-ear cress</name>
    <dbReference type="NCBI Taxonomy" id="3702"/>
    <lineage>
        <taxon>Eukaryota</taxon>
        <taxon>Viridiplantae</taxon>
        <taxon>Streptophyta</taxon>
        <taxon>Embryophyta</taxon>
        <taxon>Tracheophyta</taxon>
        <taxon>Spermatophyta</taxon>
        <taxon>Magnoliopsida</taxon>
        <taxon>eudicotyledons</taxon>
        <taxon>Gunneridae</taxon>
        <taxon>Pentapetalae</taxon>
        <taxon>rosids</taxon>
        <taxon>malvids</taxon>
        <taxon>Brassicales</taxon>
        <taxon>Brassicaceae</taxon>
        <taxon>Camelineae</taxon>
        <taxon>Arabidopsis</taxon>
    </lineage>
</organism>
<keyword id="KW-0238">DNA-binding</keyword>
<keyword id="KW-0539">Nucleus</keyword>
<keyword id="KW-0597">Phosphoprotein</keyword>
<keyword id="KW-1185">Reference proteome</keyword>
<keyword id="KW-0346">Stress response</keyword>
<keyword id="KW-0804">Transcription</keyword>
<keyword id="KW-0805">Transcription regulation</keyword>
<accession>Q9SCW4</accession>
<accession>Q0WMX0</accession>
<feature type="chain" id="PRO_0000124587" description="Heat stress transcription factor B-2a">
    <location>
        <begin position="1"/>
        <end position="299"/>
    </location>
</feature>
<feature type="DNA-binding region" evidence="1">
    <location>
        <begin position="21"/>
        <end position="115"/>
    </location>
</feature>
<feature type="region of interest" description="Disordered" evidence="3">
    <location>
        <begin position="119"/>
        <end position="157"/>
    </location>
</feature>
<feature type="region of interest" description="Hydrophobic repeat HR-A/B">
    <location>
        <begin position="166"/>
        <end position="211"/>
    </location>
</feature>
<feature type="short sequence motif" description="Nuclear localization signal" evidence="2">
    <location>
        <begin position="261"/>
        <end position="264"/>
    </location>
</feature>
<dbReference type="EMBL" id="AJ251867">
    <property type="protein sequence ID" value="CAB63802.1"/>
    <property type="molecule type" value="mRNA"/>
</dbReference>
<dbReference type="EMBL" id="AB016880">
    <property type="protein sequence ID" value="BAB10163.1"/>
    <property type="molecule type" value="Genomic_DNA"/>
</dbReference>
<dbReference type="EMBL" id="CP002688">
    <property type="protein sequence ID" value="AED97552.1"/>
    <property type="molecule type" value="Genomic_DNA"/>
</dbReference>
<dbReference type="EMBL" id="BT008542">
    <property type="protein sequence ID" value="AAP40369.1"/>
    <property type="molecule type" value="mRNA"/>
</dbReference>
<dbReference type="EMBL" id="BT008658">
    <property type="protein sequence ID" value="AAP40470.1"/>
    <property type="molecule type" value="mRNA"/>
</dbReference>
<dbReference type="EMBL" id="AK229690">
    <property type="protein sequence ID" value="BAF01530.1"/>
    <property type="molecule type" value="mRNA"/>
</dbReference>
<dbReference type="RefSeq" id="NP_201008.2">
    <property type="nucleotide sequence ID" value="NM_125595.4"/>
</dbReference>
<dbReference type="SMR" id="Q9SCW4"/>
<dbReference type="FunCoup" id="Q9SCW4">
    <property type="interactions" value="41"/>
</dbReference>
<dbReference type="STRING" id="3702.Q9SCW4"/>
<dbReference type="iPTMnet" id="Q9SCW4"/>
<dbReference type="PaxDb" id="3702-AT5G62020.1"/>
<dbReference type="ProteomicsDB" id="230186"/>
<dbReference type="EnsemblPlants" id="AT5G62020.1">
    <property type="protein sequence ID" value="AT5G62020.1"/>
    <property type="gene ID" value="AT5G62020"/>
</dbReference>
<dbReference type="GeneID" id="836322"/>
<dbReference type="Gramene" id="AT5G62020.1">
    <property type="protein sequence ID" value="AT5G62020.1"/>
    <property type="gene ID" value="AT5G62020"/>
</dbReference>
<dbReference type="KEGG" id="ath:AT5G62020"/>
<dbReference type="Araport" id="AT5G62020"/>
<dbReference type="TAIR" id="AT5G62020">
    <property type="gene designation" value="HSFB2A"/>
</dbReference>
<dbReference type="eggNOG" id="KOG0627">
    <property type="taxonomic scope" value="Eukaryota"/>
</dbReference>
<dbReference type="HOGENOM" id="CLU_030308_3_2_1"/>
<dbReference type="InParanoid" id="Q9SCW4"/>
<dbReference type="OMA" id="MKSICDN"/>
<dbReference type="OrthoDB" id="60033at2759"/>
<dbReference type="PhylomeDB" id="Q9SCW4"/>
<dbReference type="PRO" id="PR:Q9SCW4"/>
<dbReference type="Proteomes" id="UP000006548">
    <property type="component" value="Chromosome 5"/>
</dbReference>
<dbReference type="ExpressionAtlas" id="Q9SCW4">
    <property type="expression patterns" value="baseline and differential"/>
</dbReference>
<dbReference type="GO" id="GO:0005634">
    <property type="term" value="C:nucleus"/>
    <property type="evidence" value="ECO:0007669"/>
    <property type="project" value="UniProtKB-SubCell"/>
</dbReference>
<dbReference type="GO" id="GO:0003700">
    <property type="term" value="F:DNA-binding transcription factor activity"/>
    <property type="evidence" value="ECO:0000250"/>
    <property type="project" value="TAIR"/>
</dbReference>
<dbReference type="GO" id="GO:0000976">
    <property type="term" value="F:transcription cis-regulatory region binding"/>
    <property type="evidence" value="ECO:0000353"/>
    <property type="project" value="TAIR"/>
</dbReference>
<dbReference type="FunFam" id="1.10.10.10:FF:000037">
    <property type="entry name" value="Heat stress transcription factor B-4"/>
    <property type="match status" value="1"/>
</dbReference>
<dbReference type="Gene3D" id="1.10.10.10">
    <property type="entry name" value="Winged helix-like DNA-binding domain superfamily/Winged helix DNA-binding domain"/>
    <property type="match status" value="1"/>
</dbReference>
<dbReference type="InterPro" id="IPR000232">
    <property type="entry name" value="HSF_DNA-bd"/>
</dbReference>
<dbReference type="InterPro" id="IPR036388">
    <property type="entry name" value="WH-like_DNA-bd_sf"/>
</dbReference>
<dbReference type="InterPro" id="IPR036390">
    <property type="entry name" value="WH_DNA-bd_sf"/>
</dbReference>
<dbReference type="PANTHER" id="PTHR10015">
    <property type="entry name" value="HEAT SHOCK TRANSCRIPTION FACTOR"/>
    <property type="match status" value="1"/>
</dbReference>
<dbReference type="PANTHER" id="PTHR10015:SF333">
    <property type="entry name" value="HEAT STRESS TRANSCRIPTION FACTOR B-2A"/>
    <property type="match status" value="1"/>
</dbReference>
<dbReference type="Pfam" id="PF00447">
    <property type="entry name" value="HSF_DNA-bind"/>
    <property type="match status" value="1"/>
</dbReference>
<dbReference type="PRINTS" id="PR00056">
    <property type="entry name" value="HSFDOMAIN"/>
</dbReference>
<dbReference type="SMART" id="SM00415">
    <property type="entry name" value="HSF"/>
    <property type="match status" value="1"/>
</dbReference>
<dbReference type="SUPFAM" id="SSF46785">
    <property type="entry name" value="Winged helix' DNA-binding domain"/>
    <property type="match status" value="1"/>
</dbReference>
<dbReference type="PROSITE" id="PS00434">
    <property type="entry name" value="HSF_DOMAIN"/>
    <property type="match status" value="1"/>
</dbReference>
<sequence>MNSPPVDAMITGESSSQRSIPTPFLTKTFNLVEDSSIDDVISWNEDGSSFIVWNPTDFAKDLLPKHFKHNNFSSFVRQLNTYGFKKVVPDRWEFSNDFFKRGEKRLLREIQRRKITTTHQTVVAPSSEQRNQTMVVSPSNSGEDNNNNQVMSSSPSSWYCHQTKTTGNGGLSVELLEENEKLRSQNIQLNRELTQMKSICDNIYSLMSNYVGSQPTDRSYSPGGSSSQPMEFLPAKRFSEMEIEEEEEASPRLFGVPIGLKRTRSEGVQVKTTAVVGENSDEETPWLRHYNRTNQRVCN</sequence>
<evidence type="ECO:0000250" key="1"/>
<evidence type="ECO:0000255" key="2"/>
<evidence type="ECO:0000256" key="3">
    <source>
        <dbReference type="SAM" id="MobiDB-lite"/>
    </source>
</evidence>
<evidence type="ECO:0000305" key="4"/>